<protein>
    <recommendedName>
        <fullName>Tubulin beta chain</fullName>
    </recommendedName>
    <alternativeName>
        <fullName>Beta-tubulin</fullName>
    </alternativeName>
</protein>
<evidence type="ECO:0000250" key="1">
    <source>
        <dbReference type="UniProtKB" id="P68363"/>
    </source>
</evidence>
<evidence type="ECO:0000250" key="2">
    <source>
        <dbReference type="UniProtKB" id="Q13509"/>
    </source>
</evidence>
<evidence type="ECO:0000256" key="3">
    <source>
        <dbReference type="SAM" id="MobiDB-lite"/>
    </source>
</evidence>
<evidence type="ECO:0000305" key="4"/>
<accession>Q96TU8</accession>
<gene>
    <name type="primary">TBB1</name>
</gene>
<keyword id="KW-0963">Cytoplasm</keyword>
<keyword id="KW-0206">Cytoskeleton</keyword>
<keyword id="KW-0342">GTP-binding</keyword>
<keyword id="KW-0460">Magnesium</keyword>
<keyword id="KW-0479">Metal-binding</keyword>
<keyword id="KW-0493">Microtubule</keyword>
<keyword id="KW-0547">Nucleotide-binding</keyword>
<proteinExistence type="inferred from homology"/>
<comment type="function">
    <text>Tubulin is the major constituent of microtubules, a cylinder consisting of laterally associated linear protofilaments composed of alpha- and beta-tubulin heterodimers. Microtubules grow by the addition of GTP-tubulin dimers to the microtubule end, where a stabilizing cap forms. Below the cap, tubulin dimers are in GDP-bound state, owing to GTPase activity of alpha-tubulin.</text>
</comment>
<comment type="cofactor">
    <cofactor evidence="1">
        <name>Mg(2+)</name>
        <dbReference type="ChEBI" id="CHEBI:18420"/>
    </cofactor>
</comment>
<comment type="subunit">
    <text>Dimer of alpha and beta chains. A typical microtubule is a hollow water-filled tube with an outer diameter of 25 nm and an inner diameter of 15 nM. Alpha-beta heterodimers associate head-to-tail to form protofilaments running lengthwise along the microtubule wall with the beta-tubulin subunit facing the microtubule plus end conferring a structural polarity. Microtubules usually have 13 protofilaments but different protofilament numbers can be found in some organisms and specialized cells.</text>
</comment>
<comment type="subcellular location">
    <subcellularLocation>
        <location>Cytoplasm</location>
        <location>Cytoskeleton</location>
    </subcellularLocation>
</comment>
<comment type="similarity">
    <text evidence="4">Belongs to the tubulin family.</text>
</comment>
<organism>
    <name type="scientific">Uromyces fabae</name>
    <name type="common">Rust fungus</name>
    <dbReference type="NCBI Taxonomy" id="55588"/>
    <lineage>
        <taxon>Eukaryota</taxon>
        <taxon>Fungi</taxon>
        <taxon>Dikarya</taxon>
        <taxon>Basidiomycota</taxon>
        <taxon>Pucciniomycotina</taxon>
        <taxon>Pucciniomycetes</taxon>
        <taxon>Pucciniales</taxon>
        <taxon>Pucciniaceae</taxon>
        <taxon>Uromyces</taxon>
    </lineage>
</organism>
<sequence length="447" mass="50037">MREIVHLQTGQCGNQIGAKFWEVVSDEHGIATDGQYKGNTDLQLERISVYYNEVAANKYVPRAVLIDLEPGTMDSVRSGAFGSLFRPDNFVFGQSGAGNNWAKGHYTEGAELVDSVLDVVRKEAEGCDCLQGFQITHSLGGGTGAGMGTLLISKIREEFPDRMMATFSVVPSPKVSDTVVEPYNATLSVHQLVENSDETFCIDNEALYDICFRTLKLATPTYGDLNHLVSIVMSGITTCLRFPGQLNSDLRKLAVNMVPFPRLHFFMVGFAPLTARGSQQYRAITVPELTSQMFDAKNMMAASDPRHGRYLTVAAYFRGKVSMKEVEENMLSVQNKNSNYFVEWIPNNVQTAHCDIAPRAHKMSVTFIGNSTAIQDLFKRVADQFTAMFRRKAFLHWYTGEGMDEMEFTEAESNMQDLVAEYQQYQEAHMDDEEAEEAYEDEAPPEE</sequence>
<reference key="1">
    <citation type="submission" date="2001-02" db="EMBL/GenBank/DDBJ databases">
        <title>Prelude to transformation: characterization of the beta-tubulin and succinate dehydrogenase genes from the rust fungus Uromyces fabae.</title>
        <authorList>
            <person name="Wirsel S.G.R."/>
            <person name="Voegele R.T."/>
            <person name="Baenninger R."/>
            <person name="Hahn M."/>
            <person name="Mendgen K.W."/>
        </authorList>
    </citation>
    <scope>NUCLEOTIDE SEQUENCE [GENOMIC DNA]</scope>
</reference>
<name>TBB_UROFA</name>
<feature type="chain" id="PRO_0000048439" description="Tubulin beta chain">
    <location>
        <begin position="1"/>
        <end position="447"/>
    </location>
</feature>
<feature type="region of interest" description="Disordered" evidence="3">
    <location>
        <begin position="427"/>
        <end position="447"/>
    </location>
</feature>
<feature type="compositionally biased region" description="Acidic residues" evidence="3">
    <location>
        <begin position="430"/>
        <end position="447"/>
    </location>
</feature>
<feature type="binding site" evidence="2">
    <location>
        <position position="11"/>
    </location>
    <ligand>
        <name>GTP</name>
        <dbReference type="ChEBI" id="CHEBI:37565"/>
    </ligand>
</feature>
<feature type="binding site" evidence="1">
    <location>
        <position position="69"/>
    </location>
    <ligand>
        <name>GTP</name>
        <dbReference type="ChEBI" id="CHEBI:37565"/>
    </ligand>
</feature>
<feature type="binding site" evidence="1">
    <location>
        <position position="69"/>
    </location>
    <ligand>
        <name>Mg(2+)</name>
        <dbReference type="ChEBI" id="CHEBI:18420"/>
    </ligand>
</feature>
<feature type="binding site" evidence="2">
    <location>
        <position position="138"/>
    </location>
    <ligand>
        <name>GTP</name>
        <dbReference type="ChEBI" id="CHEBI:37565"/>
    </ligand>
</feature>
<feature type="binding site" evidence="2">
    <location>
        <position position="142"/>
    </location>
    <ligand>
        <name>GTP</name>
        <dbReference type="ChEBI" id="CHEBI:37565"/>
    </ligand>
</feature>
<feature type="binding site" evidence="2">
    <location>
        <position position="143"/>
    </location>
    <ligand>
        <name>GTP</name>
        <dbReference type="ChEBI" id="CHEBI:37565"/>
    </ligand>
</feature>
<feature type="binding site" evidence="2">
    <location>
        <position position="144"/>
    </location>
    <ligand>
        <name>GTP</name>
        <dbReference type="ChEBI" id="CHEBI:37565"/>
    </ligand>
</feature>
<feature type="binding site" evidence="2">
    <location>
        <position position="204"/>
    </location>
    <ligand>
        <name>GTP</name>
        <dbReference type="ChEBI" id="CHEBI:37565"/>
    </ligand>
</feature>
<feature type="binding site" evidence="2">
    <location>
        <position position="226"/>
    </location>
    <ligand>
        <name>GTP</name>
        <dbReference type="ChEBI" id="CHEBI:37565"/>
    </ligand>
</feature>
<dbReference type="EMBL" id="AJ311552">
    <property type="protein sequence ID" value="CAC83953.1"/>
    <property type="molecule type" value="Genomic_DNA"/>
</dbReference>
<dbReference type="SMR" id="Q96TU8"/>
<dbReference type="GO" id="GO:0005737">
    <property type="term" value="C:cytoplasm"/>
    <property type="evidence" value="ECO:0007669"/>
    <property type="project" value="UniProtKB-KW"/>
</dbReference>
<dbReference type="GO" id="GO:0005874">
    <property type="term" value="C:microtubule"/>
    <property type="evidence" value="ECO:0007669"/>
    <property type="project" value="UniProtKB-KW"/>
</dbReference>
<dbReference type="GO" id="GO:0005525">
    <property type="term" value="F:GTP binding"/>
    <property type="evidence" value="ECO:0007669"/>
    <property type="project" value="UniProtKB-KW"/>
</dbReference>
<dbReference type="GO" id="GO:0003924">
    <property type="term" value="F:GTPase activity"/>
    <property type="evidence" value="ECO:0007669"/>
    <property type="project" value="InterPro"/>
</dbReference>
<dbReference type="GO" id="GO:0046872">
    <property type="term" value="F:metal ion binding"/>
    <property type="evidence" value="ECO:0007669"/>
    <property type="project" value="UniProtKB-KW"/>
</dbReference>
<dbReference type="GO" id="GO:0005200">
    <property type="term" value="F:structural constituent of cytoskeleton"/>
    <property type="evidence" value="ECO:0007669"/>
    <property type="project" value="InterPro"/>
</dbReference>
<dbReference type="GO" id="GO:0007017">
    <property type="term" value="P:microtubule-based process"/>
    <property type="evidence" value="ECO:0007669"/>
    <property type="project" value="InterPro"/>
</dbReference>
<dbReference type="CDD" id="cd02187">
    <property type="entry name" value="beta_tubulin"/>
    <property type="match status" value="1"/>
</dbReference>
<dbReference type="FunFam" id="1.10.287.600:FF:000006">
    <property type="entry name" value="Tubulin beta chain"/>
    <property type="match status" value="1"/>
</dbReference>
<dbReference type="FunFam" id="3.30.1330.20:FF:000002">
    <property type="entry name" value="Tubulin beta chain"/>
    <property type="match status" value="1"/>
</dbReference>
<dbReference type="FunFam" id="3.40.50.1440:FF:000003">
    <property type="entry name" value="Tubulin beta chain"/>
    <property type="match status" value="1"/>
</dbReference>
<dbReference type="Gene3D" id="1.10.287.600">
    <property type="entry name" value="Helix hairpin bin"/>
    <property type="match status" value="1"/>
</dbReference>
<dbReference type="Gene3D" id="3.30.1330.20">
    <property type="entry name" value="Tubulin/FtsZ, C-terminal domain"/>
    <property type="match status" value="1"/>
</dbReference>
<dbReference type="Gene3D" id="3.40.50.1440">
    <property type="entry name" value="Tubulin/FtsZ, GTPase domain"/>
    <property type="match status" value="1"/>
</dbReference>
<dbReference type="InterPro" id="IPR013838">
    <property type="entry name" value="Beta-tubulin_BS"/>
</dbReference>
<dbReference type="InterPro" id="IPR002453">
    <property type="entry name" value="Beta_tubulin"/>
</dbReference>
<dbReference type="InterPro" id="IPR008280">
    <property type="entry name" value="Tub_FtsZ_C"/>
</dbReference>
<dbReference type="InterPro" id="IPR000217">
    <property type="entry name" value="Tubulin"/>
</dbReference>
<dbReference type="InterPro" id="IPR037103">
    <property type="entry name" value="Tubulin/FtsZ-like_C"/>
</dbReference>
<dbReference type="InterPro" id="IPR018316">
    <property type="entry name" value="Tubulin/FtsZ_2-layer-sand-dom"/>
</dbReference>
<dbReference type="InterPro" id="IPR036525">
    <property type="entry name" value="Tubulin/FtsZ_GTPase_sf"/>
</dbReference>
<dbReference type="InterPro" id="IPR023123">
    <property type="entry name" value="Tubulin_C"/>
</dbReference>
<dbReference type="InterPro" id="IPR017975">
    <property type="entry name" value="Tubulin_CS"/>
</dbReference>
<dbReference type="InterPro" id="IPR003008">
    <property type="entry name" value="Tubulin_FtsZ_GTPase"/>
</dbReference>
<dbReference type="PANTHER" id="PTHR11588">
    <property type="entry name" value="TUBULIN"/>
    <property type="match status" value="1"/>
</dbReference>
<dbReference type="Pfam" id="PF00091">
    <property type="entry name" value="Tubulin"/>
    <property type="match status" value="1"/>
</dbReference>
<dbReference type="Pfam" id="PF03953">
    <property type="entry name" value="Tubulin_C"/>
    <property type="match status" value="1"/>
</dbReference>
<dbReference type="PRINTS" id="PR01163">
    <property type="entry name" value="BETATUBULIN"/>
</dbReference>
<dbReference type="PRINTS" id="PR01161">
    <property type="entry name" value="TUBULIN"/>
</dbReference>
<dbReference type="SMART" id="SM00864">
    <property type="entry name" value="Tubulin"/>
    <property type="match status" value="1"/>
</dbReference>
<dbReference type="SMART" id="SM00865">
    <property type="entry name" value="Tubulin_C"/>
    <property type="match status" value="1"/>
</dbReference>
<dbReference type="SUPFAM" id="SSF55307">
    <property type="entry name" value="Tubulin C-terminal domain-like"/>
    <property type="match status" value="1"/>
</dbReference>
<dbReference type="SUPFAM" id="SSF52490">
    <property type="entry name" value="Tubulin nucleotide-binding domain-like"/>
    <property type="match status" value="1"/>
</dbReference>
<dbReference type="PROSITE" id="PS00227">
    <property type="entry name" value="TUBULIN"/>
    <property type="match status" value="1"/>
</dbReference>
<dbReference type="PROSITE" id="PS00228">
    <property type="entry name" value="TUBULIN_B_AUTOREG"/>
    <property type="match status" value="1"/>
</dbReference>